<name>DCD_LEGPH</name>
<feature type="chain" id="PRO_1000009746" description="dCTP deaminase">
    <location>
        <begin position="1"/>
        <end position="188"/>
    </location>
</feature>
<feature type="active site" description="Proton donor/acceptor" evidence="1">
    <location>
        <position position="137"/>
    </location>
</feature>
<feature type="binding site" evidence="1">
    <location>
        <begin position="111"/>
        <end position="116"/>
    </location>
    <ligand>
        <name>dCTP</name>
        <dbReference type="ChEBI" id="CHEBI:61481"/>
    </ligand>
</feature>
<feature type="binding site" evidence="1">
    <location>
        <begin position="135"/>
        <end position="137"/>
    </location>
    <ligand>
        <name>dCTP</name>
        <dbReference type="ChEBI" id="CHEBI:61481"/>
    </ligand>
</feature>
<feature type="binding site" evidence="1">
    <location>
        <position position="156"/>
    </location>
    <ligand>
        <name>dCTP</name>
        <dbReference type="ChEBI" id="CHEBI:61481"/>
    </ligand>
</feature>
<feature type="binding site" evidence="1">
    <location>
        <position position="170"/>
    </location>
    <ligand>
        <name>dCTP</name>
        <dbReference type="ChEBI" id="CHEBI:61481"/>
    </ligand>
</feature>
<feature type="binding site" evidence="1">
    <location>
        <position position="180"/>
    </location>
    <ligand>
        <name>dCTP</name>
        <dbReference type="ChEBI" id="CHEBI:61481"/>
    </ligand>
</feature>
<sequence length="188" mass="21137">MSIKSDRWIEKMALEHGMISPFQAGQVRENQNGRIISYGVSSYGYDVRCSNEFKIFTNINSAIVDPKAFDENSFVDVQSDVCIIPPNSFALARTVEYFRIPRNILTICLGKSTYARCGIIVNVTPLEPEWEGHVTLEFSNTTTLPAKIYAYEGVAQMLFLEANEVCAVSYRDRNGKYQGQTGVTLPRT</sequence>
<organism>
    <name type="scientific">Legionella pneumophila subsp. pneumophila (strain Philadelphia 1 / ATCC 33152 / DSM 7513)</name>
    <dbReference type="NCBI Taxonomy" id="272624"/>
    <lineage>
        <taxon>Bacteria</taxon>
        <taxon>Pseudomonadati</taxon>
        <taxon>Pseudomonadota</taxon>
        <taxon>Gammaproteobacteria</taxon>
        <taxon>Legionellales</taxon>
        <taxon>Legionellaceae</taxon>
        <taxon>Legionella</taxon>
    </lineage>
</organism>
<gene>
    <name evidence="1" type="primary">dcd</name>
    <name type="ordered locus">lpg2956</name>
</gene>
<proteinExistence type="inferred from homology"/>
<comment type="function">
    <text evidence="1">Catalyzes the deamination of dCTP to dUTP.</text>
</comment>
<comment type="catalytic activity">
    <reaction evidence="1">
        <text>dCTP + H2O + H(+) = dUTP + NH4(+)</text>
        <dbReference type="Rhea" id="RHEA:22680"/>
        <dbReference type="ChEBI" id="CHEBI:15377"/>
        <dbReference type="ChEBI" id="CHEBI:15378"/>
        <dbReference type="ChEBI" id="CHEBI:28938"/>
        <dbReference type="ChEBI" id="CHEBI:61481"/>
        <dbReference type="ChEBI" id="CHEBI:61555"/>
        <dbReference type="EC" id="3.5.4.13"/>
    </reaction>
</comment>
<comment type="pathway">
    <text evidence="1">Pyrimidine metabolism; dUMP biosynthesis; dUMP from dCTP (dUTP route): step 1/2.</text>
</comment>
<comment type="subunit">
    <text evidence="1">Homotrimer.</text>
</comment>
<comment type="similarity">
    <text evidence="1">Belongs to the dCTP deaminase family.</text>
</comment>
<dbReference type="EC" id="3.5.4.13" evidence="1"/>
<dbReference type="EMBL" id="AE017354">
    <property type="protein sequence ID" value="AAU29002.1"/>
    <property type="molecule type" value="Genomic_DNA"/>
</dbReference>
<dbReference type="RefSeq" id="WP_010948641.1">
    <property type="nucleotide sequence ID" value="NC_002942.5"/>
</dbReference>
<dbReference type="RefSeq" id="YP_096949.1">
    <property type="nucleotide sequence ID" value="NC_002942.5"/>
</dbReference>
<dbReference type="SMR" id="Q5ZRC6"/>
<dbReference type="STRING" id="272624.lpg2956"/>
<dbReference type="PaxDb" id="272624-lpg2956"/>
<dbReference type="GeneID" id="57036962"/>
<dbReference type="KEGG" id="lpn:lpg2956"/>
<dbReference type="PATRIC" id="fig|272624.6.peg.3161"/>
<dbReference type="eggNOG" id="COG0717">
    <property type="taxonomic scope" value="Bacteria"/>
</dbReference>
<dbReference type="HOGENOM" id="CLU_087476_4_0_6"/>
<dbReference type="OrthoDB" id="9780956at2"/>
<dbReference type="UniPathway" id="UPA00610">
    <property type="reaction ID" value="UER00665"/>
</dbReference>
<dbReference type="Proteomes" id="UP000000609">
    <property type="component" value="Chromosome"/>
</dbReference>
<dbReference type="GO" id="GO:0008829">
    <property type="term" value="F:dCTP deaminase activity"/>
    <property type="evidence" value="ECO:0007669"/>
    <property type="project" value="UniProtKB-UniRule"/>
</dbReference>
<dbReference type="GO" id="GO:0000166">
    <property type="term" value="F:nucleotide binding"/>
    <property type="evidence" value="ECO:0007669"/>
    <property type="project" value="UniProtKB-KW"/>
</dbReference>
<dbReference type="GO" id="GO:0006226">
    <property type="term" value="P:dUMP biosynthetic process"/>
    <property type="evidence" value="ECO:0007669"/>
    <property type="project" value="UniProtKB-UniPathway"/>
</dbReference>
<dbReference type="GO" id="GO:0006229">
    <property type="term" value="P:dUTP biosynthetic process"/>
    <property type="evidence" value="ECO:0007669"/>
    <property type="project" value="UniProtKB-UniRule"/>
</dbReference>
<dbReference type="GO" id="GO:0015949">
    <property type="term" value="P:nucleobase-containing small molecule interconversion"/>
    <property type="evidence" value="ECO:0007669"/>
    <property type="project" value="TreeGrafter"/>
</dbReference>
<dbReference type="CDD" id="cd07557">
    <property type="entry name" value="trimeric_dUTPase"/>
    <property type="match status" value="1"/>
</dbReference>
<dbReference type="FunFam" id="2.70.40.10:FF:000001">
    <property type="entry name" value="dCTP deaminase"/>
    <property type="match status" value="1"/>
</dbReference>
<dbReference type="Gene3D" id="2.70.40.10">
    <property type="match status" value="1"/>
</dbReference>
<dbReference type="HAMAP" id="MF_00146">
    <property type="entry name" value="dCTP_deaminase"/>
    <property type="match status" value="1"/>
</dbReference>
<dbReference type="InterPro" id="IPR011962">
    <property type="entry name" value="dCTP_deaminase"/>
</dbReference>
<dbReference type="InterPro" id="IPR036157">
    <property type="entry name" value="dUTPase-like_sf"/>
</dbReference>
<dbReference type="InterPro" id="IPR033704">
    <property type="entry name" value="dUTPase_trimeric"/>
</dbReference>
<dbReference type="NCBIfam" id="TIGR02274">
    <property type="entry name" value="dCTP_deam"/>
    <property type="match status" value="1"/>
</dbReference>
<dbReference type="PANTHER" id="PTHR42680">
    <property type="entry name" value="DCTP DEAMINASE"/>
    <property type="match status" value="1"/>
</dbReference>
<dbReference type="PANTHER" id="PTHR42680:SF3">
    <property type="entry name" value="DCTP DEAMINASE"/>
    <property type="match status" value="1"/>
</dbReference>
<dbReference type="Pfam" id="PF22769">
    <property type="entry name" value="DCD"/>
    <property type="match status" value="1"/>
</dbReference>
<dbReference type="SUPFAM" id="SSF51283">
    <property type="entry name" value="dUTPase-like"/>
    <property type="match status" value="1"/>
</dbReference>
<protein>
    <recommendedName>
        <fullName evidence="1">dCTP deaminase</fullName>
        <ecNumber evidence="1">3.5.4.13</ecNumber>
    </recommendedName>
    <alternativeName>
        <fullName evidence="1">Deoxycytidine triphosphate deaminase</fullName>
    </alternativeName>
</protein>
<keyword id="KW-0378">Hydrolase</keyword>
<keyword id="KW-0546">Nucleotide metabolism</keyword>
<keyword id="KW-0547">Nucleotide-binding</keyword>
<keyword id="KW-1185">Reference proteome</keyword>
<accession>Q5ZRC6</accession>
<evidence type="ECO:0000255" key="1">
    <source>
        <dbReference type="HAMAP-Rule" id="MF_00146"/>
    </source>
</evidence>
<reference key="1">
    <citation type="journal article" date="2004" name="Science">
        <title>The genomic sequence of the accidental pathogen Legionella pneumophila.</title>
        <authorList>
            <person name="Chien M."/>
            <person name="Morozova I."/>
            <person name="Shi S."/>
            <person name="Sheng H."/>
            <person name="Chen J."/>
            <person name="Gomez S.M."/>
            <person name="Asamani G."/>
            <person name="Hill K."/>
            <person name="Nuara J."/>
            <person name="Feder M."/>
            <person name="Rineer J."/>
            <person name="Greenberg J.J."/>
            <person name="Steshenko V."/>
            <person name="Park S.H."/>
            <person name="Zhao B."/>
            <person name="Teplitskaya E."/>
            <person name="Edwards J.R."/>
            <person name="Pampou S."/>
            <person name="Georghiou A."/>
            <person name="Chou I.-C."/>
            <person name="Iannuccilli W."/>
            <person name="Ulz M.E."/>
            <person name="Kim D.H."/>
            <person name="Geringer-Sameth A."/>
            <person name="Goldsberry C."/>
            <person name="Morozov P."/>
            <person name="Fischer S.G."/>
            <person name="Segal G."/>
            <person name="Qu X."/>
            <person name="Rzhetsky A."/>
            <person name="Zhang P."/>
            <person name="Cayanis E."/>
            <person name="De Jong P.J."/>
            <person name="Ju J."/>
            <person name="Kalachikov S."/>
            <person name="Shuman H.A."/>
            <person name="Russo J.J."/>
        </authorList>
    </citation>
    <scope>NUCLEOTIDE SEQUENCE [LARGE SCALE GENOMIC DNA]</scope>
    <source>
        <strain>Philadelphia 1 / ATCC 33152 / DSM 7513</strain>
    </source>
</reference>